<reference key="1">
    <citation type="journal article" date="2008" name="Proc. Natl. Acad. Sci. U.S.A.">
        <title>Interaction with host SGS3 is required for suppression of RNA silencing by tomato yellow leaf curl virus V2 protein.</title>
        <authorList>
            <person name="Glick E."/>
            <person name="Zrachya A."/>
            <person name="Levy Y."/>
            <person name="Mett A."/>
            <person name="Gidoni D."/>
            <person name="Belausov E."/>
            <person name="Citovsky V."/>
            <person name="Gafni Y."/>
        </authorList>
    </citation>
    <scope>NUCLEOTIDE SEQUENCE [MRNA]</scope>
    <scope>SUBCELLULAR LOCATION</scope>
    <scope>INTERACTION WITH TOMATO YELLOW LEAF CURL VIRUS V2</scope>
</reference>
<comment type="function">
    <text>Required for post-transcriptional gene silencing and natural virus resistance.</text>
</comment>
<comment type="subunit">
    <text evidence="4">Interacts with begomoviruses protein V2.</text>
</comment>
<comment type="interaction">
    <interactant intactId="EBI-15678015">
        <id>A5YVF1</id>
    </interactant>
    <interactant intactId="EBI-15678004">
        <id>Q764F6</id>
        <label>V2</label>
    </interactant>
    <organismsDiffer>true</organismsDiffer>
    <experiments>3</experiments>
</comment>
<comment type="subcellular location">
    <subcellularLocation>
        <location evidence="4">Cytoplasm</location>
        <location evidence="4">Perinuclear region</location>
    </subcellularLocation>
    <text evidence="1">Accumulates in inclusion bodies in the cell periphery. May interact with the ER network from the perinuclear region out to the cell periphery (By similarity).</text>
</comment>
<comment type="miscellaneous">
    <text>Does not move between plant cells.</text>
</comment>
<comment type="similarity">
    <text evidence="5">Belongs to the SGS3 family.</text>
</comment>
<organism>
    <name type="scientific">Solanum lycopersicum</name>
    <name type="common">Tomato</name>
    <name type="synonym">Lycopersicon esculentum</name>
    <dbReference type="NCBI Taxonomy" id="4081"/>
    <lineage>
        <taxon>Eukaryota</taxon>
        <taxon>Viridiplantae</taxon>
        <taxon>Streptophyta</taxon>
        <taxon>Embryophyta</taxon>
        <taxon>Tracheophyta</taxon>
        <taxon>Spermatophyta</taxon>
        <taxon>Magnoliopsida</taxon>
        <taxon>eudicotyledons</taxon>
        <taxon>Gunneridae</taxon>
        <taxon>Pentapetalae</taxon>
        <taxon>asterids</taxon>
        <taxon>lamiids</taxon>
        <taxon>Solanales</taxon>
        <taxon>Solanaceae</taxon>
        <taxon>Solanoideae</taxon>
        <taxon>Solaneae</taxon>
        <taxon>Solanum</taxon>
        <taxon>Solanum subgen. Lycopersicon</taxon>
    </lineage>
</organism>
<evidence type="ECO:0000250" key="1"/>
<evidence type="ECO:0000255" key="2"/>
<evidence type="ECO:0000256" key="3">
    <source>
        <dbReference type="SAM" id="MobiDB-lite"/>
    </source>
</evidence>
<evidence type="ECO:0000269" key="4">
    <source>
    </source>
</evidence>
<evidence type="ECO:0000305" key="5"/>
<accession>A5YVF1</accession>
<feature type="chain" id="PRO_0000333290" description="Protein SUPPRESSOR OF GENE SILENCING 3">
    <location>
        <begin position="1"/>
        <end position="633"/>
    </location>
</feature>
<feature type="region of interest" description="Disordered" evidence="3">
    <location>
        <begin position="1"/>
        <end position="133"/>
    </location>
</feature>
<feature type="region of interest" description="Disordered" evidence="3">
    <location>
        <begin position="147"/>
        <end position="193"/>
    </location>
</feature>
<feature type="coiled-coil region" evidence="2">
    <location>
        <begin position="565"/>
        <end position="606"/>
    </location>
</feature>
<feature type="compositionally biased region" description="Polar residues" evidence="3">
    <location>
        <begin position="10"/>
        <end position="24"/>
    </location>
</feature>
<feature type="compositionally biased region" description="Polar residues" evidence="3">
    <location>
        <begin position="56"/>
        <end position="67"/>
    </location>
</feature>
<feature type="compositionally biased region" description="Low complexity" evidence="3">
    <location>
        <begin position="93"/>
        <end position="109"/>
    </location>
</feature>
<feature type="compositionally biased region" description="Acidic residues" evidence="3">
    <location>
        <begin position="170"/>
        <end position="193"/>
    </location>
</feature>
<gene>
    <name type="primary">SGS3</name>
</gene>
<proteinExistence type="evidence at protein level"/>
<sequence length="633" mass="72529">MSFSKWGGKPSNSSEKQKASSTPTVEEINRGVGDIGLNSEQNEGWEVYARKPKNKGGSSAGKQWAPQNPSPKAWGNQNTKAWGHPDVGKKSGTRNNAGSGRGSGNNWSTPSDPQKLARPHLYDGGFPSSAPVPPALKNGWDWSSRVASAHPKDNSQVAAAADDDKASEHDAEDNELDFLDESDDDLHSDDFDSDVGEMSYETRKKNPWFNQLFHSLDSLTVTEINEPERQWHCPACKGGPGAIEWFTGLQSLMTHAKTKGLRVKIHRELAELLEEDLRQRGTSVVPPGEVYGRWGGMEFKDKEIVWPPMVIIMNTRLDKDENDKWIGMGNQELLEYFSSYAAVKARHSYGPQGHRGMSLLIFEASAVGYIEADRLSEHFSENGRNRDAWERRSARFYPGGKRLLYGYMADKKDIDNFNQHSAGKSKLKFEMRSYKEAVWNPAKQMREDNQQLIWFKNKAAKHQMQAKALEESLSLVSEKHRQTLEENKIVRLKTKMHHEQIKEEMEFQEQFFKDQIKIIHDARTAREDNFEKTQQEQREMVKQSNANTASVEDHRVRAEKVAKFIKLQDKEMEEFVEERENLMRTHDDRIAALRRKYWEEEVELERKFDLELSKLMEKYSPKQSDEVNSSGTM</sequence>
<dbReference type="EMBL" id="EF590136">
    <property type="protein sequence ID" value="ABQ96272.1"/>
    <property type="molecule type" value="mRNA"/>
</dbReference>
<dbReference type="RefSeq" id="NP_001234711.1">
    <property type="nucleotide sequence ID" value="NM_001247782.1"/>
</dbReference>
<dbReference type="SMR" id="A5YVF1"/>
<dbReference type="DIP" id="DIP-29657N"/>
<dbReference type="FunCoup" id="A5YVF1">
    <property type="interactions" value="801"/>
</dbReference>
<dbReference type="IntAct" id="A5YVF1">
    <property type="interactions" value="1"/>
</dbReference>
<dbReference type="STRING" id="4081.A5YVF1"/>
<dbReference type="PaxDb" id="4081-Solyc04g025300.2.1"/>
<dbReference type="GeneID" id="100134882"/>
<dbReference type="KEGG" id="sly:100134882"/>
<dbReference type="eggNOG" id="ENOG502QPU5">
    <property type="taxonomic scope" value="Eukaryota"/>
</dbReference>
<dbReference type="InParanoid" id="A5YVF1"/>
<dbReference type="OrthoDB" id="1936239at2759"/>
<dbReference type="Proteomes" id="UP000004994">
    <property type="component" value="Unplaced"/>
</dbReference>
<dbReference type="ExpressionAtlas" id="A5YVF1">
    <property type="expression patterns" value="baseline"/>
</dbReference>
<dbReference type="GO" id="GO:0048471">
    <property type="term" value="C:perinuclear region of cytoplasm"/>
    <property type="evidence" value="ECO:0007669"/>
    <property type="project" value="UniProtKB-SubCell"/>
</dbReference>
<dbReference type="GO" id="GO:0051607">
    <property type="term" value="P:defense response to virus"/>
    <property type="evidence" value="ECO:0007669"/>
    <property type="project" value="InterPro"/>
</dbReference>
<dbReference type="GO" id="GO:0050688">
    <property type="term" value="P:regulation of defense response to virus"/>
    <property type="evidence" value="ECO:0007669"/>
    <property type="project" value="UniProtKB-KW"/>
</dbReference>
<dbReference type="GO" id="GO:0031047">
    <property type="term" value="P:regulatory ncRNA-mediated gene silencing"/>
    <property type="evidence" value="ECO:0007669"/>
    <property type="project" value="UniProtKB-KW"/>
</dbReference>
<dbReference type="Gene3D" id="3.30.70.2890">
    <property type="entry name" value="XS domain"/>
    <property type="match status" value="1"/>
</dbReference>
<dbReference type="InterPro" id="IPR044287">
    <property type="entry name" value="SGS3"/>
</dbReference>
<dbReference type="InterPro" id="IPR005380">
    <property type="entry name" value="XS_domain"/>
</dbReference>
<dbReference type="InterPro" id="IPR038588">
    <property type="entry name" value="XS_domain_sf"/>
</dbReference>
<dbReference type="InterPro" id="IPR005381">
    <property type="entry name" value="Znf-XS_domain"/>
</dbReference>
<dbReference type="PANTHER" id="PTHR46602">
    <property type="entry name" value="PROTEIN SUPPRESSOR OF GENE SILENCING 3"/>
    <property type="match status" value="1"/>
</dbReference>
<dbReference type="PANTHER" id="PTHR46602:SF1">
    <property type="entry name" value="PROTEIN SUPPRESSOR OF GENE SILENCING 3"/>
    <property type="match status" value="1"/>
</dbReference>
<dbReference type="Pfam" id="PF03468">
    <property type="entry name" value="XS"/>
    <property type="match status" value="1"/>
</dbReference>
<dbReference type="Pfam" id="PF03470">
    <property type="entry name" value="zf-XS"/>
    <property type="match status" value="1"/>
</dbReference>
<name>SGS3_SOLLC</name>
<keyword id="KW-0930">Antiviral protein</keyword>
<keyword id="KW-0175">Coiled coil</keyword>
<keyword id="KW-0963">Cytoplasm</keyword>
<keyword id="KW-1185">Reference proteome</keyword>
<keyword id="KW-0943">RNA-mediated gene silencing</keyword>
<protein>
    <recommendedName>
        <fullName>Protein SUPPRESSOR OF GENE SILENCING 3</fullName>
    </recommendedName>
    <alternativeName>
        <fullName>SlSGS3</fullName>
    </alternativeName>
</protein>